<dbReference type="EC" id="2.7.8.17" evidence="2"/>
<dbReference type="EMBL" id="AK173132">
    <property type="protein sequence ID" value="BAD32410.1"/>
    <property type="status" value="ALT_INIT"/>
    <property type="molecule type" value="mRNA"/>
</dbReference>
<dbReference type="EMBL" id="AK140867">
    <property type="protein sequence ID" value="BAE24503.1"/>
    <property type="molecule type" value="mRNA"/>
</dbReference>
<dbReference type="EMBL" id="AK154710">
    <property type="protein sequence ID" value="BAE32779.1"/>
    <property type="status" value="ALT_INIT"/>
    <property type="molecule type" value="mRNA"/>
</dbReference>
<dbReference type="CCDS" id="CCDS24110.1">
    <molecule id="Q69ZN6-1"/>
</dbReference>
<dbReference type="RefSeq" id="NP_001004164.2">
    <molecule id="Q69ZN6-1"/>
    <property type="nucleotide sequence ID" value="NM_001004164.3"/>
</dbReference>
<dbReference type="RefSeq" id="NP_001351636.1">
    <molecule id="Q69ZN6-2"/>
    <property type="nucleotide sequence ID" value="NM_001364707.2"/>
</dbReference>
<dbReference type="SMR" id="Q69ZN6"/>
<dbReference type="BioGRID" id="240639">
    <property type="interactions" value="3"/>
</dbReference>
<dbReference type="FunCoup" id="Q69ZN6">
    <property type="interactions" value="1982"/>
</dbReference>
<dbReference type="STRING" id="10090.ENSMUSP00000020251"/>
<dbReference type="GlyCosmos" id="Q69ZN6">
    <property type="glycosylation" value="8 sites, No reported glycans"/>
</dbReference>
<dbReference type="GlyGen" id="Q69ZN6">
    <property type="glycosylation" value="16 sites, 9 N-linked glycans (13 sites)"/>
</dbReference>
<dbReference type="iPTMnet" id="Q69ZN6"/>
<dbReference type="PhosphoSitePlus" id="Q69ZN6"/>
<dbReference type="SwissPalm" id="Q69ZN6"/>
<dbReference type="PaxDb" id="10090-ENSMUSP00000020251"/>
<dbReference type="PeptideAtlas" id="Q69ZN6"/>
<dbReference type="ProteomicsDB" id="271415">
    <molecule id="Q69ZN6-1"/>
</dbReference>
<dbReference type="ProteomicsDB" id="271416">
    <molecule id="Q69ZN6-2"/>
</dbReference>
<dbReference type="Pumba" id="Q69ZN6"/>
<dbReference type="Antibodypedia" id="44958">
    <property type="antibodies" value="74 antibodies from 16 providers"/>
</dbReference>
<dbReference type="Ensembl" id="ENSMUST00000020251.10">
    <molecule id="Q69ZN6-1"/>
    <property type="protein sequence ID" value="ENSMUSP00000020251.8"/>
    <property type="gene ID" value="ENSMUSG00000035311.17"/>
</dbReference>
<dbReference type="GeneID" id="432486"/>
<dbReference type="KEGG" id="mmu:432486"/>
<dbReference type="UCSC" id="uc007grk.1">
    <molecule id="Q69ZN6-1"/>
    <property type="organism name" value="mouse"/>
</dbReference>
<dbReference type="UCSC" id="uc011xlg.1">
    <molecule id="Q69ZN6-2"/>
    <property type="organism name" value="mouse"/>
</dbReference>
<dbReference type="AGR" id="MGI:3643902"/>
<dbReference type="CTD" id="79158"/>
<dbReference type="MGI" id="MGI:3643902">
    <property type="gene designation" value="Gnptab"/>
</dbReference>
<dbReference type="VEuPathDB" id="HostDB:ENSMUSG00000035311"/>
<dbReference type="eggNOG" id="ENOG502QQMR">
    <property type="taxonomic scope" value="Eukaryota"/>
</dbReference>
<dbReference type="GeneTree" id="ENSGT00390000006747"/>
<dbReference type="HOGENOM" id="CLU_002469_0_0_1"/>
<dbReference type="InParanoid" id="Q69ZN6"/>
<dbReference type="OMA" id="MIDRVVM"/>
<dbReference type="OrthoDB" id="263283at2759"/>
<dbReference type="PhylomeDB" id="Q69ZN6"/>
<dbReference type="TreeFam" id="TF324175"/>
<dbReference type="BRENDA" id="2.7.8.17">
    <property type="organism ID" value="3474"/>
</dbReference>
<dbReference type="BioGRID-ORCS" id="432486">
    <property type="hits" value="2 hits in 80 CRISPR screens"/>
</dbReference>
<dbReference type="ChiTaRS" id="Gnptab">
    <property type="organism name" value="mouse"/>
</dbReference>
<dbReference type="PRO" id="PR:Q69ZN6"/>
<dbReference type="Proteomes" id="UP000000589">
    <property type="component" value="Chromosome 10"/>
</dbReference>
<dbReference type="RNAct" id="Q69ZN6">
    <property type="molecule type" value="protein"/>
</dbReference>
<dbReference type="Bgee" id="ENSMUSG00000035311">
    <property type="expression patterns" value="Expressed in ventral tegmental area and 247 other cell types or tissues"/>
</dbReference>
<dbReference type="ExpressionAtlas" id="Q69ZN6">
    <property type="expression patterns" value="baseline and differential"/>
</dbReference>
<dbReference type="GO" id="GO:0005794">
    <property type="term" value="C:Golgi apparatus"/>
    <property type="evidence" value="ECO:0000250"/>
    <property type="project" value="UniProtKB"/>
</dbReference>
<dbReference type="GO" id="GO:0000139">
    <property type="term" value="C:Golgi membrane"/>
    <property type="evidence" value="ECO:0000250"/>
    <property type="project" value="UniProtKB"/>
</dbReference>
<dbReference type="GO" id="GO:0005509">
    <property type="term" value="F:calcium ion binding"/>
    <property type="evidence" value="ECO:0007669"/>
    <property type="project" value="InterPro"/>
</dbReference>
<dbReference type="GO" id="GO:0003976">
    <property type="term" value="F:UDP-N-acetylglucosamine-lysosomal-enzyme N-acetylglucosaminephosphotransferase activity"/>
    <property type="evidence" value="ECO:0000250"/>
    <property type="project" value="UniProtKB"/>
</dbReference>
<dbReference type="GO" id="GO:0046835">
    <property type="term" value="P:carbohydrate phosphorylation"/>
    <property type="evidence" value="ECO:0000315"/>
    <property type="project" value="MGI"/>
</dbReference>
<dbReference type="GO" id="GO:0051649">
    <property type="term" value="P:establishment of localization in cell"/>
    <property type="evidence" value="ECO:0000315"/>
    <property type="project" value="MGI"/>
</dbReference>
<dbReference type="GO" id="GO:0007040">
    <property type="term" value="P:lysosome organization"/>
    <property type="evidence" value="ECO:0000250"/>
    <property type="project" value="UniProtKB"/>
</dbReference>
<dbReference type="GO" id="GO:0016256">
    <property type="term" value="P:N-glycan processing to lysosome"/>
    <property type="evidence" value="ECO:0000250"/>
    <property type="project" value="UniProtKB"/>
</dbReference>
<dbReference type="GO" id="GO:0009306">
    <property type="term" value="P:protein secretion"/>
    <property type="evidence" value="ECO:0000315"/>
    <property type="project" value="MGI"/>
</dbReference>
<dbReference type="GO" id="GO:0033299">
    <property type="term" value="P:secretion of lysosomal enzymes"/>
    <property type="evidence" value="ECO:0000315"/>
    <property type="project" value="MGI"/>
</dbReference>
<dbReference type="CDD" id="cd21599">
    <property type="entry name" value="RRM1_GNPTAB"/>
    <property type="match status" value="1"/>
</dbReference>
<dbReference type="CDD" id="cd21600">
    <property type="entry name" value="RRM2_GNPTAB"/>
    <property type="match status" value="1"/>
</dbReference>
<dbReference type="FunFam" id="3.30.300.320:FF:000002">
    <property type="entry name" value="N-acetylglucosamine-1-phosphotransferase subunits alpha/beta isoform X1"/>
    <property type="match status" value="1"/>
</dbReference>
<dbReference type="Gene3D" id="3.30.300.320">
    <property type="match status" value="1"/>
</dbReference>
<dbReference type="InterPro" id="IPR010506">
    <property type="entry name" value="DMAP1-bd"/>
</dbReference>
<dbReference type="InterPro" id="IPR018247">
    <property type="entry name" value="EF_Hand_1_Ca_BS"/>
</dbReference>
<dbReference type="InterPro" id="IPR002048">
    <property type="entry name" value="EF_hand_dom"/>
</dbReference>
<dbReference type="InterPro" id="IPR041536">
    <property type="entry name" value="GNPTAB_reg"/>
</dbReference>
<dbReference type="InterPro" id="IPR035993">
    <property type="entry name" value="Notch-like_dom_sf"/>
</dbReference>
<dbReference type="InterPro" id="IPR000800">
    <property type="entry name" value="Notch_dom"/>
</dbReference>
<dbReference type="InterPro" id="IPR047141">
    <property type="entry name" value="Stealth"/>
</dbReference>
<dbReference type="InterPro" id="IPR031358">
    <property type="entry name" value="Stealth_CR1"/>
</dbReference>
<dbReference type="InterPro" id="IPR021520">
    <property type="entry name" value="Stealth_CR2"/>
</dbReference>
<dbReference type="InterPro" id="IPR031357">
    <property type="entry name" value="Stealth_CR3"/>
</dbReference>
<dbReference type="InterPro" id="IPR031356">
    <property type="entry name" value="Stealth_CR4"/>
</dbReference>
<dbReference type="PANTHER" id="PTHR24045">
    <property type="match status" value="1"/>
</dbReference>
<dbReference type="PANTHER" id="PTHR24045:SF0">
    <property type="entry name" value="N-ACETYLGLUCOSAMINE-1-PHOSPHOTRANSFERASE SUBUNITS ALPHA_BETA"/>
    <property type="match status" value="1"/>
</dbReference>
<dbReference type="Pfam" id="PF06464">
    <property type="entry name" value="DMAP_binding"/>
    <property type="match status" value="1"/>
</dbReference>
<dbReference type="Pfam" id="PF18440">
    <property type="entry name" value="GlcNAc-1_reg"/>
    <property type="match status" value="1"/>
</dbReference>
<dbReference type="Pfam" id="PF00066">
    <property type="entry name" value="Notch"/>
    <property type="match status" value="2"/>
</dbReference>
<dbReference type="Pfam" id="PF17101">
    <property type="entry name" value="Stealth_CR1"/>
    <property type="match status" value="1"/>
</dbReference>
<dbReference type="Pfam" id="PF11380">
    <property type="entry name" value="Stealth_CR2"/>
    <property type="match status" value="1"/>
</dbReference>
<dbReference type="Pfam" id="PF17102">
    <property type="entry name" value="Stealth_CR3"/>
    <property type="match status" value="1"/>
</dbReference>
<dbReference type="Pfam" id="PF17103">
    <property type="entry name" value="Stealth_CR4"/>
    <property type="match status" value="1"/>
</dbReference>
<dbReference type="SMART" id="SM01137">
    <property type="entry name" value="DMAP_binding"/>
    <property type="match status" value="1"/>
</dbReference>
<dbReference type="SMART" id="SM00004">
    <property type="entry name" value="NL"/>
    <property type="match status" value="2"/>
</dbReference>
<dbReference type="SUPFAM" id="SSF90193">
    <property type="entry name" value="Notch domain"/>
    <property type="match status" value="1"/>
</dbReference>
<dbReference type="PROSITE" id="PS51912">
    <property type="entry name" value="DMAP1_BIND"/>
    <property type="match status" value="1"/>
</dbReference>
<dbReference type="PROSITE" id="PS00018">
    <property type="entry name" value="EF_HAND_1"/>
    <property type="match status" value="1"/>
</dbReference>
<dbReference type="PROSITE" id="PS50222">
    <property type="entry name" value="EF_HAND_2"/>
    <property type="match status" value="1"/>
</dbReference>
<dbReference type="PROSITE" id="PS50258">
    <property type="entry name" value="LNR"/>
    <property type="match status" value="2"/>
</dbReference>
<feature type="chain" id="PRO_0000225010" description="N-acetylglucosamine-1-phosphotransferase subunit alpha">
    <location>
        <begin position="1"/>
        <end position="907"/>
    </location>
</feature>
<feature type="chain" id="PRO_0000225011" description="N-acetylglucosamine-1-phosphotransferase subunit beta">
    <location>
        <begin position="908"/>
        <end position="1235"/>
    </location>
</feature>
<feature type="transmembrane region" description="Helical" evidence="3">
    <location>
        <begin position="22"/>
        <end position="42"/>
    </location>
</feature>
<feature type="transmembrane region" description="Helical" evidence="3">
    <location>
        <begin position="1194"/>
        <end position="1214"/>
    </location>
</feature>
<feature type="repeat" description="LNR 1">
    <location>
        <begin position="438"/>
        <end position="473"/>
    </location>
</feature>
<feature type="repeat" description="LNR 2">
    <location>
        <begin position="505"/>
        <end position="545"/>
    </location>
</feature>
<feature type="domain" description="DMAP1-binding" evidence="6">
    <location>
        <begin position="699"/>
        <end position="823"/>
    </location>
</feature>
<feature type="domain" description="EF-hand" evidence="4">
    <location>
        <begin position="984"/>
        <end position="1019"/>
    </location>
</feature>
<feature type="region of interest" description="Disordered" evidence="7">
    <location>
        <begin position="751"/>
        <end position="783"/>
    </location>
</feature>
<feature type="region of interest" description="Disordered" evidence="7">
    <location>
        <begin position="830"/>
        <end position="850"/>
    </location>
</feature>
<feature type="compositionally biased region" description="Basic and acidic residues" evidence="7">
    <location>
        <begin position="837"/>
        <end position="848"/>
    </location>
</feature>
<feature type="binding site" evidence="5">
    <location>
        <position position="449"/>
    </location>
    <ligand>
        <name>Ca(2+)</name>
        <dbReference type="ChEBI" id="CHEBI:29108"/>
    </ligand>
</feature>
<feature type="binding site" evidence="5">
    <location>
        <position position="464"/>
    </location>
    <ligand>
        <name>Ca(2+)</name>
        <dbReference type="ChEBI" id="CHEBI:29108"/>
    </ligand>
</feature>
<feature type="binding site" evidence="5">
    <location>
        <position position="467"/>
    </location>
    <ligand>
        <name>Ca(2+)</name>
        <dbReference type="ChEBI" id="CHEBI:29108"/>
    </ligand>
</feature>
<feature type="binding site" evidence="5">
    <location>
        <position position="516"/>
    </location>
    <ligand>
        <name>Ca(2+)</name>
        <dbReference type="ChEBI" id="CHEBI:29108"/>
    </ligand>
</feature>
<feature type="binding site" evidence="5">
    <location>
        <position position="531"/>
    </location>
    <ligand>
        <name>Ca(2+)</name>
        <dbReference type="ChEBI" id="CHEBI:29108"/>
    </ligand>
</feature>
<feature type="binding site" evidence="5">
    <location>
        <position position="534"/>
    </location>
    <ligand>
        <name>Ca(2+)</name>
        <dbReference type="ChEBI" id="CHEBI:29108"/>
    </ligand>
</feature>
<feature type="binding site" evidence="4">
    <location>
        <position position="997"/>
    </location>
    <ligand>
        <name>Ca(2+)</name>
        <dbReference type="ChEBI" id="CHEBI:29108"/>
    </ligand>
</feature>
<feature type="binding site" evidence="4">
    <location>
        <position position="999"/>
    </location>
    <ligand>
        <name>Ca(2+)</name>
        <dbReference type="ChEBI" id="CHEBI:29108"/>
    </ligand>
</feature>
<feature type="binding site" evidence="4">
    <location>
        <position position="1001"/>
    </location>
    <ligand>
        <name>Ca(2+)</name>
        <dbReference type="ChEBI" id="CHEBI:29108"/>
    </ligand>
</feature>
<feature type="binding site" evidence="4">
    <location>
        <position position="1008"/>
    </location>
    <ligand>
        <name>Ca(2+)</name>
        <dbReference type="ChEBI" id="CHEBI:29108"/>
    </ligand>
</feature>
<feature type="site" description="Cleavage; by MBTPS1" evidence="1">
    <location>
        <begin position="907"/>
        <end position="908"/>
    </location>
</feature>
<feature type="glycosylation site" description="N-linked (GlcNAc...) asparagine" evidence="3">
    <location>
        <position position="83"/>
    </location>
</feature>
<feature type="glycosylation site" description="N-linked (GlcNAc...) asparagine" evidence="3">
    <location>
        <position position="114"/>
    </location>
</feature>
<feature type="glycosylation site" description="N-linked (GlcNAc...) asparagine" evidence="3">
    <location>
        <position position="148"/>
    </location>
</feature>
<feature type="glycosylation site" description="N-linked (GlcNAc...) asparagine" evidence="3">
    <location>
        <position position="179"/>
    </location>
</feature>
<feature type="glycosylation site" description="N-linked (GlcNAc...) asparagine" evidence="3">
    <location>
        <position position="614"/>
    </location>
</feature>
<feature type="glycosylation site" description="N-linked (GlcNAc...) asparagine" evidence="3">
    <location>
        <position position="729"/>
    </location>
</feature>
<feature type="glycosylation site" description="N-linked (GlcNAc...) asparagine" evidence="3">
    <location>
        <position position="988"/>
    </location>
</feature>
<feature type="glycosylation site" description="N-linked (GlcNAc...) asparagine" evidence="3">
    <location>
        <position position="1108"/>
    </location>
</feature>
<feature type="disulfide bond" evidence="5">
    <location>
        <begin position="438"/>
        <end position="461"/>
    </location>
</feature>
<feature type="disulfide bond" evidence="5">
    <location>
        <begin position="452"/>
        <end position="468"/>
    </location>
</feature>
<feature type="disulfide bond" evidence="5">
    <location>
        <begin position="505"/>
        <end position="528"/>
    </location>
</feature>
<feature type="disulfide bond" evidence="5">
    <location>
        <begin position="519"/>
        <end position="535"/>
    </location>
</feature>
<feature type="splice variant" id="VSP_017340" description="In isoform 2." evidence="9">
    <location>
        <begin position="1"/>
        <end position="46"/>
    </location>
</feature>
<feature type="splice variant" id="VSP_017341" description="In isoform 2." evidence="9">
    <original>DQYHVLFDSYRDNIAGKSFQN</original>
    <variation>MGSTSASWASLSPSSRLSSSE</variation>
    <location>
        <begin position="47"/>
        <end position="67"/>
    </location>
</feature>
<feature type="sequence conflict" description="In Ref. 2; BAE24503." evidence="10" ref="2">
    <original>G</original>
    <variation>S</variation>
    <location>
        <position position="444"/>
    </location>
</feature>
<feature type="sequence conflict" description="In Ref. 2; BAE32779." evidence="10" ref="2">
    <original>A</original>
    <variation>V</variation>
    <location>
        <position position="707"/>
    </location>
</feature>
<keyword id="KW-0025">Alternative splicing</keyword>
<keyword id="KW-0106">Calcium</keyword>
<keyword id="KW-1015">Disulfide bond</keyword>
<keyword id="KW-0325">Glycoprotein</keyword>
<keyword id="KW-0333">Golgi apparatus</keyword>
<keyword id="KW-0472">Membrane</keyword>
<keyword id="KW-0479">Metal-binding</keyword>
<keyword id="KW-1185">Reference proteome</keyword>
<keyword id="KW-0677">Repeat</keyword>
<keyword id="KW-0735">Signal-anchor</keyword>
<keyword id="KW-0808">Transferase</keyword>
<keyword id="KW-0812">Transmembrane</keyword>
<keyword id="KW-1133">Transmembrane helix</keyword>
<evidence type="ECO:0000250" key="1"/>
<evidence type="ECO:0000250" key="2">
    <source>
        <dbReference type="UniProtKB" id="Q3T906"/>
    </source>
</evidence>
<evidence type="ECO:0000255" key="3"/>
<evidence type="ECO:0000255" key="4">
    <source>
        <dbReference type="PROSITE-ProRule" id="PRU00448"/>
    </source>
</evidence>
<evidence type="ECO:0000255" key="5">
    <source>
        <dbReference type="PROSITE-ProRule" id="PRU00525"/>
    </source>
</evidence>
<evidence type="ECO:0000255" key="6">
    <source>
        <dbReference type="PROSITE-ProRule" id="PRU01260"/>
    </source>
</evidence>
<evidence type="ECO:0000256" key="7">
    <source>
        <dbReference type="SAM" id="MobiDB-lite"/>
    </source>
</evidence>
<evidence type="ECO:0000269" key="8">
    <source>
    </source>
</evidence>
<evidence type="ECO:0000303" key="9">
    <source>
    </source>
</evidence>
<evidence type="ECO:0000305" key="10"/>
<name>GNPTA_MOUSE</name>
<organism>
    <name type="scientific">Mus musculus</name>
    <name type="common">Mouse</name>
    <dbReference type="NCBI Taxonomy" id="10090"/>
    <lineage>
        <taxon>Eukaryota</taxon>
        <taxon>Metazoa</taxon>
        <taxon>Chordata</taxon>
        <taxon>Craniata</taxon>
        <taxon>Vertebrata</taxon>
        <taxon>Euteleostomi</taxon>
        <taxon>Mammalia</taxon>
        <taxon>Eutheria</taxon>
        <taxon>Euarchontoglires</taxon>
        <taxon>Glires</taxon>
        <taxon>Rodentia</taxon>
        <taxon>Myomorpha</taxon>
        <taxon>Muroidea</taxon>
        <taxon>Muridae</taxon>
        <taxon>Murinae</taxon>
        <taxon>Mus</taxon>
        <taxon>Mus</taxon>
    </lineage>
</organism>
<sequence>MLLKLLQRQTYTCLSHRYGLYVCFVGVVVTIVSAFQFGEVVLEWSRDQYHVLFDSYRDNIAGKSFQNRLCLPMPIDVVYTWVNGTDLELLKELQQVREHMEEEQRAMRETLGKNTTEPTKKSEKQLECLLTHCIKVPMLVLDPPLPANCTLKDLPTLYPSFHAASDMFNVAKPKNPSTNVSVVVFDTTKDVEDAHAGPFKGGSKQMVWRAYLTTDKEAPGLVLMQGLAFLSGFPPTFKETSQLKTKLPEKLSSKIKLLRLYSEASVALLKLNNPKGFQELNKQTKKNMTIDGKELTISPAYLLWDLSAISQSKQDEDVSASRFEDNEELRYSLRSIERHAPWVRNIFIVTNGQIPSWLNLDNPRVTIVTHQDIFQNLSHLPTFSSPAIESHIHRIEGLSQKFIYLNDDVMFGKDVWPDDFYSHSKGQKVYLTWPVPNCAEGCPGSWIKDGYCDKACNNSACDWDGGDCSGNTAGNRFVAGGGGTGNIGAGQHWQFGGGINTISYCNQGCANSWLADKFCDQACNVLSCGFDAGDCGQDHFHELYKVTLLPNQTHYVVPKGEYLSYFSFANIARRGVEGTYSDNPIIRHASIANKWKTIHLIMHSGMNATTIYFNLTLQNANDEEFKIQIAVEVDTREAPKLNSTTQKAYESLVSPVTPLPQADVPFEDVPKEKRFPKIRRHDVNATGRFQEEVKIPRVNISLLPKEAQVRLSNLDLQLERGDITLKGYNLSKSALLRSFLGNSLDTKIKPQARTDETKGNLEVPQENPSHRRPHGFAGEHRSERWTAPAETVTVKGRDHALNPPPVLETNARLAQPTLGVTVSKENLSPLIVPPESHLPKEEESDRAEGNAVPVKELVPGRRLQQNYPGFLPWEKKKYFQDLLDEEESLKTQLAYFTDSKHTGRQLKDTFADSLRYVNKILNSKFGFTSRKVPAHMPHMIDRIVMQELQDMFPEEFDKTSFHKVRHSEDMQFAFSYFYYLMSAVQPLNISQVFHEVDTDQSGVLSDREIRTLATRIHDLPLSLQDLTGLEHMLINCSKMLPANITQLNNIPPTQEAYYDPNLPPVTKSLVTNCKPVTDKIHKAYKDKNKYRFEIMGEEEIAFKMIRTNVSHVVGQLDDIRKNPRKFVCLNDNIDHNHKDARTVKAVLRDFYESMFPIPSQFELPREYRNRFLHMHELQEWRAYRDKLKFWTHCVLATLIIFTIFSFFAEQIIALKRKIFPRRRIHKEASPDRIRV</sequence>
<reference key="1">
    <citation type="journal article" date="2004" name="DNA Res.">
        <title>Prediction of the coding sequences of mouse homologues of KIAA gene: IV. The complete nucleotide sequences of 500 mouse KIAA-homologous cDNAs identified by screening of terminal sequences of cDNA clones randomly sampled from size-fractionated libraries.</title>
        <authorList>
            <person name="Okazaki N."/>
            <person name="Kikuno R."/>
            <person name="Ohara R."/>
            <person name="Inamoto S."/>
            <person name="Koseki H."/>
            <person name="Hiraoka S."/>
            <person name="Saga Y."/>
            <person name="Seino S."/>
            <person name="Nishimura M."/>
            <person name="Kaisho T."/>
            <person name="Hoshino K."/>
            <person name="Kitamura H."/>
            <person name="Nagase T."/>
            <person name="Ohara O."/>
            <person name="Koga H."/>
        </authorList>
    </citation>
    <scope>NUCLEOTIDE SEQUENCE [LARGE SCALE MRNA] (ISOFORM 1)</scope>
    <source>
        <tissue>Brain</tissue>
    </source>
</reference>
<reference key="2">
    <citation type="journal article" date="2005" name="Science">
        <title>The transcriptional landscape of the mammalian genome.</title>
        <authorList>
            <person name="Carninci P."/>
            <person name="Kasukawa T."/>
            <person name="Katayama S."/>
            <person name="Gough J."/>
            <person name="Frith M.C."/>
            <person name="Maeda N."/>
            <person name="Oyama R."/>
            <person name="Ravasi T."/>
            <person name="Lenhard B."/>
            <person name="Wells C."/>
            <person name="Kodzius R."/>
            <person name="Shimokawa K."/>
            <person name="Bajic V.B."/>
            <person name="Brenner S.E."/>
            <person name="Batalov S."/>
            <person name="Forrest A.R."/>
            <person name="Zavolan M."/>
            <person name="Davis M.J."/>
            <person name="Wilming L.G."/>
            <person name="Aidinis V."/>
            <person name="Allen J.E."/>
            <person name="Ambesi-Impiombato A."/>
            <person name="Apweiler R."/>
            <person name="Aturaliya R.N."/>
            <person name="Bailey T.L."/>
            <person name="Bansal M."/>
            <person name="Baxter L."/>
            <person name="Beisel K.W."/>
            <person name="Bersano T."/>
            <person name="Bono H."/>
            <person name="Chalk A.M."/>
            <person name="Chiu K.P."/>
            <person name="Choudhary V."/>
            <person name="Christoffels A."/>
            <person name="Clutterbuck D.R."/>
            <person name="Crowe M.L."/>
            <person name="Dalla E."/>
            <person name="Dalrymple B.P."/>
            <person name="de Bono B."/>
            <person name="Della Gatta G."/>
            <person name="di Bernardo D."/>
            <person name="Down T."/>
            <person name="Engstrom P."/>
            <person name="Fagiolini M."/>
            <person name="Faulkner G."/>
            <person name="Fletcher C.F."/>
            <person name="Fukushima T."/>
            <person name="Furuno M."/>
            <person name="Futaki S."/>
            <person name="Gariboldi M."/>
            <person name="Georgii-Hemming P."/>
            <person name="Gingeras T.R."/>
            <person name="Gojobori T."/>
            <person name="Green R.E."/>
            <person name="Gustincich S."/>
            <person name="Harbers M."/>
            <person name="Hayashi Y."/>
            <person name="Hensch T.K."/>
            <person name="Hirokawa N."/>
            <person name="Hill D."/>
            <person name="Huminiecki L."/>
            <person name="Iacono M."/>
            <person name="Ikeo K."/>
            <person name="Iwama A."/>
            <person name="Ishikawa T."/>
            <person name="Jakt M."/>
            <person name="Kanapin A."/>
            <person name="Katoh M."/>
            <person name="Kawasawa Y."/>
            <person name="Kelso J."/>
            <person name="Kitamura H."/>
            <person name="Kitano H."/>
            <person name="Kollias G."/>
            <person name="Krishnan S.P."/>
            <person name="Kruger A."/>
            <person name="Kummerfeld S.K."/>
            <person name="Kurochkin I.V."/>
            <person name="Lareau L.F."/>
            <person name="Lazarevic D."/>
            <person name="Lipovich L."/>
            <person name="Liu J."/>
            <person name="Liuni S."/>
            <person name="McWilliam S."/>
            <person name="Madan Babu M."/>
            <person name="Madera M."/>
            <person name="Marchionni L."/>
            <person name="Matsuda H."/>
            <person name="Matsuzawa S."/>
            <person name="Miki H."/>
            <person name="Mignone F."/>
            <person name="Miyake S."/>
            <person name="Morris K."/>
            <person name="Mottagui-Tabar S."/>
            <person name="Mulder N."/>
            <person name="Nakano N."/>
            <person name="Nakauchi H."/>
            <person name="Ng P."/>
            <person name="Nilsson R."/>
            <person name="Nishiguchi S."/>
            <person name="Nishikawa S."/>
            <person name="Nori F."/>
            <person name="Ohara O."/>
            <person name="Okazaki Y."/>
            <person name="Orlando V."/>
            <person name="Pang K.C."/>
            <person name="Pavan W.J."/>
            <person name="Pavesi G."/>
            <person name="Pesole G."/>
            <person name="Petrovsky N."/>
            <person name="Piazza S."/>
            <person name="Reed J."/>
            <person name="Reid J.F."/>
            <person name="Ring B.Z."/>
            <person name="Ringwald M."/>
            <person name="Rost B."/>
            <person name="Ruan Y."/>
            <person name="Salzberg S.L."/>
            <person name="Sandelin A."/>
            <person name="Schneider C."/>
            <person name="Schoenbach C."/>
            <person name="Sekiguchi K."/>
            <person name="Semple C.A."/>
            <person name="Seno S."/>
            <person name="Sessa L."/>
            <person name="Sheng Y."/>
            <person name="Shibata Y."/>
            <person name="Shimada H."/>
            <person name="Shimada K."/>
            <person name="Silva D."/>
            <person name="Sinclair B."/>
            <person name="Sperling S."/>
            <person name="Stupka E."/>
            <person name="Sugiura K."/>
            <person name="Sultana R."/>
            <person name="Takenaka Y."/>
            <person name="Taki K."/>
            <person name="Tammoja K."/>
            <person name="Tan S.L."/>
            <person name="Tang S."/>
            <person name="Taylor M.S."/>
            <person name="Tegner J."/>
            <person name="Teichmann S.A."/>
            <person name="Ueda H.R."/>
            <person name="van Nimwegen E."/>
            <person name="Verardo R."/>
            <person name="Wei C.L."/>
            <person name="Yagi K."/>
            <person name="Yamanishi H."/>
            <person name="Zabarovsky E."/>
            <person name="Zhu S."/>
            <person name="Zimmer A."/>
            <person name="Hide W."/>
            <person name="Bult C."/>
            <person name="Grimmond S.M."/>
            <person name="Teasdale R.D."/>
            <person name="Liu E.T."/>
            <person name="Brusic V."/>
            <person name="Quackenbush J."/>
            <person name="Wahlestedt C."/>
            <person name="Mattick J.S."/>
            <person name="Hume D.A."/>
            <person name="Kai C."/>
            <person name="Sasaki D."/>
            <person name="Tomaru Y."/>
            <person name="Fukuda S."/>
            <person name="Kanamori-Katayama M."/>
            <person name="Suzuki M."/>
            <person name="Aoki J."/>
            <person name="Arakawa T."/>
            <person name="Iida J."/>
            <person name="Imamura K."/>
            <person name="Itoh M."/>
            <person name="Kato T."/>
            <person name="Kawaji H."/>
            <person name="Kawagashira N."/>
            <person name="Kawashima T."/>
            <person name="Kojima M."/>
            <person name="Kondo S."/>
            <person name="Konno H."/>
            <person name="Nakano K."/>
            <person name="Ninomiya N."/>
            <person name="Nishio T."/>
            <person name="Okada M."/>
            <person name="Plessy C."/>
            <person name="Shibata K."/>
            <person name="Shiraki T."/>
            <person name="Suzuki S."/>
            <person name="Tagami M."/>
            <person name="Waki K."/>
            <person name="Watahiki A."/>
            <person name="Okamura-Oho Y."/>
            <person name="Suzuki H."/>
            <person name="Kawai J."/>
            <person name="Hayashizaki Y."/>
        </authorList>
    </citation>
    <scope>NUCLEOTIDE SEQUENCE [LARGE SCALE MRNA] (ISOFORM 2)</scope>
    <source>
        <strain>C57BL/6J</strain>
        <strain>NOD</strain>
        <tissue>Head</tissue>
    </source>
</reference>
<reference key="3">
    <citation type="journal article" date="2005" name="PLoS Comput. Biol.">
        <title>Stealth proteins: in silico identification of a novel protein family rendering bacterial pathogens invisible to host immune defense.</title>
        <authorList>
            <person name="Sperisen P."/>
            <person name="Schmid C.D."/>
            <person name="Bucher P."/>
            <person name="Zilian O."/>
        </authorList>
    </citation>
    <scope>IDENTIFICATION AS A STEALTH PROTEIN</scope>
    <scope>PREDICTION OF FUNCTION</scope>
</reference>
<reference key="4">
    <citation type="journal article" date="2007" name="Invest. Ophthalmol. Vis. Sci.">
        <title>Mice lacking alpha/beta subunits of GlcNAc-1-phosphotransferase exhibit growth retardation, retinal degeneration, and secretory cell lesions.</title>
        <authorList>
            <person name="Gelfman C.M."/>
            <person name="Vogel P."/>
            <person name="Issa T.M."/>
            <person name="Turner C.A."/>
            <person name="Lee W.S."/>
            <person name="Kornfeld S."/>
            <person name="Rice D.S."/>
        </authorList>
    </citation>
    <scope>DISRUPTION PHENOTYPE</scope>
</reference>
<protein>
    <recommendedName>
        <fullName>N-acetylglucosamine-1-phosphotransferase subunits alpha/beta</fullName>
        <ecNumber evidence="2">2.7.8.17</ecNumber>
    </recommendedName>
    <alternativeName>
        <fullName>GlcNAc-1-phosphotransferase subunits alpha/beta</fullName>
    </alternativeName>
    <alternativeName>
        <fullName>Stealth protein GNPTAB</fullName>
    </alternativeName>
    <alternativeName>
        <fullName>UDP-N-acetylglucosamine-1-phosphotransferase subunits alpha/beta</fullName>
    </alternativeName>
    <component>
        <recommendedName>
            <fullName>N-acetylglucosamine-1-phosphotransferase subunit alpha</fullName>
        </recommendedName>
    </component>
    <component>
        <recommendedName>
            <fullName>N-acetylglucosamine-1-phosphotransferase subunit beta</fullName>
        </recommendedName>
    </component>
</protein>
<comment type="function">
    <text evidence="2">Catalyzes the formation of mannose 6-phosphate (M6P) markers on high mannose type oligosaccharides in the Golgi apparatus. M6P residues are required to bind to the M6P receptors (MPR), which mediate the vesicular transport of lysosomal enzymes to the endosomal/prelysosomal compartment.</text>
</comment>
<comment type="catalytic activity">
    <reaction evidence="2">
        <text>N(4)-[alpha-D-mannosyl-(1-&gt;2)-alpha-D-mannosyl-(glycan)]-L-asparaginyl-[protein] + UDP-N-acetyl-alpha-D-glucosamine = N(4)-[6-(N-acetyl-alpha-D-glucosaminyl-1-phospho)-alpha-D-mannosyl-(1-&gt;2)-alpha-D-mannosyl-(glycan)]-L-asparaginyl-[protein] + UMP + H(+)</text>
        <dbReference type="Rhea" id="RHEA:13581"/>
        <dbReference type="Rhea" id="RHEA-COMP:14507"/>
        <dbReference type="Rhea" id="RHEA-COMP:14508"/>
        <dbReference type="ChEBI" id="CHEBI:15378"/>
        <dbReference type="ChEBI" id="CHEBI:57705"/>
        <dbReference type="ChEBI" id="CHEBI:57865"/>
        <dbReference type="ChEBI" id="CHEBI:140357"/>
        <dbReference type="ChEBI" id="CHEBI:140369"/>
        <dbReference type="EC" id="2.7.8.17"/>
    </reaction>
</comment>
<comment type="subunit">
    <text evidence="2">Hexamer of two alpha, two beta and two gamma (GNPTG) subunits; disulfide-linked. The alpha and/or the beta subunits of the enzyme constitute the catalytic subunits. Interacts with LYSET; facilitates proper localization of GNPTAB.</text>
</comment>
<comment type="subcellular location">
    <molecule>N-acetylglucosamine-1-phosphotransferase subunit alpha</molecule>
    <subcellularLocation>
        <location evidence="2">Golgi apparatus membrane</location>
        <topology evidence="2">Single-pass type I membrane protein</topology>
    </subcellularLocation>
</comment>
<comment type="subcellular location">
    <molecule>N-acetylglucosamine-1-phosphotransferase subunit beta</molecule>
    <subcellularLocation>
        <location evidence="2">Golgi apparatus membrane</location>
        <topology evidence="2">Single-pass type II membrane protein</topology>
    </subcellularLocation>
</comment>
<comment type="alternative products">
    <event type="alternative splicing"/>
    <isoform>
        <id>Q69ZN6-1</id>
        <name>1</name>
        <sequence type="displayed"/>
    </isoform>
    <isoform>
        <id>Q69ZN6-2</id>
        <name>2</name>
        <sequence type="described" ref="VSP_017340 VSP_017341"/>
    </isoform>
</comment>
<comment type="domain">
    <text evidence="2">The DMAP1-binding domain mediates substrate recognition. It specifically recognizes a conformation-dependent protein determinant present in acid hydrolases.</text>
</comment>
<comment type="PTM">
    <text evidence="2">The alpha- and beta-subunits are generated by a proteolytic cleavage by MBTPS1 protease at the Lys-907-Asp-908 bond.</text>
</comment>
<comment type="disruption phenotype">
    <text evidence="8">Severe retinal degeneration, growth retardation and secretory cell lesions. Mice are smaller with a reduced mean body weight and length, along with a reduction in total tissue mass and lean body mass. They show elevated levels of serum lysosomal enzymes, cartilage defects, and display cytoplasmic alterations in secretory cells of several exocrine glands.</text>
</comment>
<comment type="miscellaneous">
    <text>Stealth proteins are part of a protein family that is conserved from bacteria to higher eukaryotes. Family members were first identified in microbes as proteins that help pathogens to elude the host innate immune system. Microbial stealth proteins are most likely involved in the biosynthesis of exopolysaccharides. Stealth proteins are predicted to function as hexose-1-phosphoryltransferases.</text>
</comment>
<comment type="similarity">
    <text evidence="10">Belongs to the stealth family.</text>
</comment>
<comment type="sequence caution" evidence="10">
    <conflict type="erroneous initiation">
        <sequence resource="EMBL-CDS" id="BAD32410"/>
    </conflict>
</comment>
<comment type="sequence caution" evidence="10">
    <conflict type="erroneous initiation">
        <sequence resource="EMBL-CDS" id="BAE32779"/>
    </conflict>
</comment>
<proteinExistence type="evidence at transcript level"/>
<accession>Q69ZN6</accession>
<accession>Q3U3K6</accession>
<accession>Q3US34</accession>
<gene>
    <name type="primary">Gnptab</name>
    <name type="synonym">Gnpta</name>
    <name type="synonym">Kiaa1208</name>
</gene>